<comment type="function">
    <text evidence="1">Catalyzes the transfer of the enolpyruvyl moiety of phosphoenolpyruvate (PEP) to the 5-hydroxyl of shikimate-3-phosphate (S3P) to produce enolpyruvyl shikimate-3-phosphate and inorganic phosphate.</text>
</comment>
<comment type="catalytic activity">
    <reaction evidence="1">
        <text>3-phosphoshikimate + phosphoenolpyruvate = 5-O-(1-carboxyvinyl)-3-phosphoshikimate + phosphate</text>
        <dbReference type="Rhea" id="RHEA:21256"/>
        <dbReference type="ChEBI" id="CHEBI:43474"/>
        <dbReference type="ChEBI" id="CHEBI:57701"/>
        <dbReference type="ChEBI" id="CHEBI:58702"/>
        <dbReference type="ChEBI" id="CHEBI:145989"/>
        <dbReference type="EC" id="2.5.1.19"/>
    </reaction>
    <physiologicalReaction direction="left-to-right" evidence="1">
        <dbReference type="Rhea" id="RHEA:21257"/>
    </physiologicalReaction>
</comment>
<comment type="pathway">
    <text evidence="1">Metabolic intermediate biosynthesis; chorismate biosynthesis; chorismate from D-erythrose 4-phosphate and phosphoenolpyruvate: step 6/7.</text>
</comment>
<comment type="subunit">
    <text evidence="1">Monomer.</text>
</comment>
<comment type="subcellular location">
    <subcellularLocation>
        <location evidence="1">Cytoplasm</location>
    </subcellularLocation>
</comment>
<comment type="similarity">
    <text evidence="1">Belongs to the EPSP synthase family.</text>
</comment>
<organism>
    <name type="scientific">Klebsiella pneumoniae subsp. pneumoniae (strain ATCC 700721 / MGH 78578)</name>
    <dbReference type="NCBI Taxonomy" id="272620"/>
    <lineage>
        <taxon>Bacteria</taxon>
        <taxon>Pseudomonadati</taxon>
        <taxon>Pseudomonadota</taxon>
        <taxon>Gammaproteobacteria</taxon>
        <taxon>Enterobacterales</taxon>
        <taxon>Enterobacteriaceae</taxon>
        <taxon>Klebsiella/Raoultella group</taxon>
        <taxon>Klebsiella</taxon>
        <taxon>Klebsiella pneumoniae complex</taxon>
    </lineage>
</organism>
<feature type="chain" id="PRO_1000012445" description="3-phosphoshikimate 1-carboxyvinyltransferase">
    <location>
        <begin position="1"/>
        <end position="427"/>
    </location>
</feature>
<feature type="active site" description="Proton acceptor" evidence="1">
    <location>
        <position position="313"/>
    </location>
</feature>
<feature type="binding site" evidence="1">
    <location>
        <position position="22"/>
    </location>
    <ligand>
        <name>3-phosphoshikimate</name>
        <dbReference type="ChEBI" id="CHEBI:145989"/>
    </ligand>
</feature>
<feature type="binding site" evidence="1">
    <location>
        <position position="22"/>
    </location>
    <ligand>
        <name>phosphoenolpyruvate</name>
        <dbReference type="ChEBI" id="CHEBI:58702"/>
    </ligand>
</feature>
<feature type="binding site" evidence="1">
    <location>
        <position position="23"/>
    </location>
    <ligand>
        <name>3-phosphoshikimate</name>
        <dbReference type="ChEBI" id="CHEBI:145989"/>
    </ligand>
</feature>
<feature type="binding site" evidence="1">
    <location>
        <position position="27"/>
    </location>
    <ligand>
        <name>3-phosphoshikimate</name>
        <dbReference type="ChEBI" id="CHEBI:145989"/>
    </ligand>
</feature>
<feature type="binding site" evidence="1">
    <location>
        <position position="96"/>
    </location>
    <ligand>
        <name>phosphoenolpyruvate</name>
        <dbReference type="ChEBI" id="CHEBI:58702"/>
    </ligand>
</feature>
<feature type="binding site" evidence="1">
    <location>
        <position position="124"/>
    </location>
    <ligand>
        <name>phosphoenolpyruvate</name>
        <dbReference type="ChEBI" id="CHEBI:58702"/>
    </ligand>
</feature>
<feature type="binding site" evidence="1">
    <location>
        <position position="169"/>
    </location>
    <ligand>
        <name>3-phosphoshikimate</name>
        <dbReference type="ChEBI" id="CHEBI:145989"/>
    </ligand>
</feature>
<feature type="binding site" evidence="1">
    <location>
        <position position="170"/>
    </location>
    <ligand>
        <name>3-phosphoshikimate</name>
        <dbReference type="ChEBI" id="CHEBI:145989"/>
    </ligand>
</feature>
<feature type="binding site" evidence="1">
    <location>
        <position position="171"/>
    </location>
    <ligand>
        <name>3-phosphoshikimate</name>
        <dbReference type="ChEBI" id="CHEBI:145989"/>
    </ligand>
</feature>
<feature type="binding site" evidence="1">
    <location>
        <position position="171"/>
    </location>
    <ligand>
        <name>phosphoenolpyruvate</name>
        <dbReference type="ChEBI" id="CHEBI:58702"/>
    </ligand>
</feature>
<feature type="binding site" evidence="1">
    <location>
        <position position="197"/>
    </location>
    <ligand>
        <name>3-phosphoshikimate</name>
        <dbReference type="ChEBI" id="CHEBI:145989"/>
    </ligand>
</feature>
<feature type="binding site" evidence="1">
    <location>
        <position position="313"/>
    </location>
    <ligand>
        <name>3-phosphoshikimate</name>
        <dbReference type="ChEBI" id="CHEBI:145989"/>
    </ligand>
</feature>
<feature type="binding site" evidence="1">
    <location>
        <position position="336"/>
    </location>
    <ligand>
        <name>3-phosphoshikimate</name>
        <dbReference type="ChEBI" id="CHEBI:145989"/>
    </ligand>
</feature>
<feature type="binding site" evidence="1">
    <location>
        <position position="340"/>
    </location>
    <ligand>
        <name>3-phosphoshikimate</name>
        <dbReference type="ChEBI" id="CHEBI:145989"/>
    </ligand>
</feature>
<feature type="binding site" evidence="1">
    <location>
        <position position="344"/>
    </location>
    <ligand>
        <name>phosphoenolpyruvate</name>
        <dbReference type="ChEBI" id="CHEBI:58702"/>
    </ligand>
</feature>
<feature type="binding site" evidence="1">
    <location>
        <position position="386"/>
    </location>
    <ligand>
        <name>phosphoenolpyruvate</name>
        <dbReference type="ChEBI" id="CHEBI:58702"/>
    </ligand>
</feature>
<feature type="binding site" evidence="1">
    <location>
        <position position="411"/>
    </location>
    <ligand>
        <name>phosphoenolpyruvate</name>
        <dbReference type="ChEBI" id="CHEBI:58702"/>
    </ligand>
</feature>
<name>AROA_KLEP7</name>
<accession>A6T701</accession>
<reference key="1">
    <citation type="submission" date="2006-09" db="EMBL/GenBank/DDBJ databases">
        <authorList>
            <consortium name="The Klebsiella pneumonia Genome Sequencing Project"/>
            <person name="McClelland M."/>
            <person name="Sanderson E.K."/>
            <person name="Spieth J."/>
            <person name="Clifton W.S."/>
            <person name="Latreille P."/>
            <person name="Sabo A."/>
            <person name="Pepin K."/>
            <person name="Bhonagiri V."/>
            <person name="Porwollik S."/>
            <person name="Ali J."/>
            <person name="Wilson R.K."/>
        </authorList>
    </citation>
    <scope>NUCLEOTIDE SEQUENCE [LARGE SCALE GENOMIC DNA]</scope>
    <source>
        <strain>ATCC 700721 / MGH 78578</strain>
    </source>
</reference>
<gene>
    <name evidence="1" type="primary">aroA</name>
    <name type="ordered locus">KPN78578_09110</name>
    <name type="ORF">KPN_00936</name>
</gene>
<sequence length="427" mass="46039">MESLTLQPIARVEGTVNLPGSKSVSNRALLLAALARGTTVLTNLLDSDDVRHMLNALSALGVQYTLSADRTRCEVTGNGGPLRSAAALELFLGNAGTAMRPLAAALCLGSNDIVLTGEPRMKERPIGHLVDALRQGGAQIDCLEQENYPPLRLRGGFQGGNVEVDGSVSSQFLTALLMTAPLAPQDTVIVIKGDLVSKPYIDITLHLMKTFGVEVDNQSYQRFVVRGKQQYQSPGDYLVEGDASSASYFLAAGAIKGGTVKVTGIGRNSVQGDIRFADVLEKMGATVTWGDDFIACTHGELKAVDMDMNHIPDAAMTIATAALFAQGTTTLRNIYNWRVKETDRLFAMATELRKVGAEVEEGEDYIRITPPAKLKYAEIGTYNDHRMAMCFSLVALSDTPVTILDPKCTAKTFPDYFEQLARISTLA</sequence>
<evidence type="ECO:0000255" key="1">
    <source>
        <dbReference type="HAMAP-Rule" id="MF_00210"/>
    </source>
</evidence>
<proteinExistence type="inferred from homology"/>
<keyword id="KW-0028">Amino-acid biosynthesis</keyword>
<keyword id="KW-0057">Aromatic amino acid biosynthesis</keyword>
<keyword id="KW-0963">Cytoplasm</keyword>
<keyword id="KW-0808">Transferase</keyword>
<dbReference type="EC" id="2.5.1.19" evidence="1"/>
<dbReference type="EMBL" id="CP000647">
    <property type="protein sequence ID" value="ABR76372.1"/>
    <property type="molecule type" value="Genomic_DNA"/>
</dbReference>
<dbReference type="RefSeq" id="WP_012068507.1">
    <property type="nucleotide sequence ID" value="NC_009648.1"/>
</dbReference>
<dbReference type="SMR" id="A6T701"/>
<dbReference type="STRING" id="272620.KPN_00936"/>
<dbReference type="jPOST" id="A6T701"/>
<dbReference type="PaxDb" id="272620-KPN_00936"/>
<dbReference type="EnsemblBacteria" id="ABR76372">
    <property type="protein sequence ID" value="ABR76372"/>
    <property type="gene ID" value="KPN_00936"/>
</dbReference>
<dbReference type="KEGG" id="kpn:KPN_00936"/>
<dbReference type="HOGENOM" id="CLU_024321_0_0_6"/>
<dbReference type="UniPathway" id="UPA00053">
    <property type="reaction ID" value="UER00089"/>
</dbReference>
<dbReference type="Proteomes" id="UP000000265">
    <property type="component" value="Chromosome"/>
</dbReference>
<dbReference type="GO" id="GO:0005737">
    <property type="term" value="C:cytoplasm"/>
    <property type="evidence" value="ECO:0007669"/>
    <property type="project" value="UniProtKB-SubCell"/>
</dbReference>
<dbReference type="GO" id="GO:0003866">
    <property type="term" value="F:3-phosphoshikimate 1-carboxyvinyltransferase activity"/>
    <property type="evidence" value="ECO:0007669"/>
    <property type="project" value="UniProtKB-UniRule"/>
</dbReference>
<dbReference type="GO" id="GO:0008652">
    <property type="term" value="P:amino acid biosynthetic process"/>
    <property type="evidence" value="ECO:0007669"/>
    <property type="project" value="UniProtKB-KW"/>
</dbReference>
<dbReference type="GO" id="GO:0009073">
    <property type="term" value="P:aromatic amino acid family biosynthetic process"/>
    <property type="evidence" value="ECO:0007669"/>
    <property type="project" value="UniProtKB-KW"/>
</dbReference>
<dbReference type="GO" id="GO:0009423">
    <property type="term" value="P:chorismate biosynthetic process"/>
    <property type="evidence" value="ECO:0007669"/>
    <property type="project" value="UniProtKB-UniRule"/>
</dbReference>
<dbReference type="CDD" id="cd01556">
    <property type="entry name" value="EPSP_synthase"/>
    <property type="match status" value="1"/>
</dbReference>
<dbReference type="FunFam" id="3.65.10.10:FF:000003">
    <property type="entry name" value="3-phosphoshikimate 1-carboxyvinyltransferase"/>
    <property type="match status" value="1"/>
</dbReference>
<dbReference type="FunFam" id="3.65.10.10:FF:000004">
    <property type="entry name" value="3-phosphoshikimate 1-carboxyvinyltransferase"/>
    <property type="match status" value="1"/>
</dbReference>
<dbReference type="Gene3D" id="3.65.10.10">
    <property type="entry name" value="Enolpyruvate transferase domain"/>
    <property type="match status" value="2"/>
</dbReference>
<dbReference type="HAMAP" id="MF_00210">
    <property type="entry name" value="EPSP_synth"/>
    <property type="match status" value="1"/>
</dbReference>
<dbReference type="InterPro" id="IPR001986">
    <property type="entry name" value="Enolpyruvate_Tfrase_dom"/>
</dbReference>
<dbReference type="InterPro" id="IPR036968">
    <property type="entry name" value="Enolpyruvate_Tfrase_sf"/>
</dbReference>
<dbReference type="InterPro" id="IPR006264">
    <property type="entry name" value="EPSP_synthase"/>
</dbReference>
<dbReference type="InterPro" id="IPR023193">
    <property type="entry name" value="EPSP_synthase_CS"/>
</dbReference>
<dbReference type="InterPro" id="IPR013792">
    <property type="entry name" value="RNA3'P_cycl/enolpyr_Trfase_a/b"/>
</dbReference>
<dbReference type="NCBIfam" id="TIGR01356">
    <property type="entry name" value="aroA"/>
    <property type="match status" value="1"/>
</dbReference>
<dbReference type="PANTHER" id="PTHR21090">
    <property type="entry name" value="AROM/DEHYDROQUINATE SYNTHASE"/>
    <property type="match status" value="1"/>
</dbReference>
<dbReference type="PANTHER" id="PTHR21090:SF5">
    <property type="entry name" value="PENTAFUNCTIONAL AROM POLYPEPTIDE"/>
    <property type="match status" value="1"/>
</dbReference>
<dbReference type="Pfam" id="PF00275">
    <property type="entry name" value="EPSP_synthase"/>
    <property type="match status" value="1"/>
</dbReference>
<dbReference type="PIRSF" id="PIRSF000505">
    <property type="entry name" value="EPSPS"/>
    <property type="match status" value="1"/>
</dbReference>
<dbReference type="SUPFAM" id="SSF55205">
    <property type="entry name" value="EPT/RTPC-like"/>
    <property type="match status" value="1"/>
</dbReference>
<dbReference type="PROSITE" id="PS00104">
    <property type="entry name" value="EPSP_SYNTHASE_1"/>
    <property type="match status" value="1"/>
</dbReference>
<dbReference type="PROSITE" id="PS00885">
    <property type="entry name" value="EPSP_SYNTHASE_2"/>
    <property type="match status" value="1"/>
</dbReference>
<protein>
    <recommendedName>
        <fullName evidence="1">3-phosphoshikimate 1-carboxyvinyltransferase</fullName>
        <ecNumber evidence="1">2.5.1.19</ecNumber>
    </recommendedName>
    <alternativeName>
        <fullName evidence="1">5-enolpyruvylshikimate-3-phosphate synthase</fullName>
        <shortName evidence="1">EPSP synthase</shortName>
        <shortName evidence="1">EPSPS</shortName>
    </alternativeName>
</protein>